<name>YIGI_SHIFL</name>
<reference key="1">
    <citation type="journal article" date="2002" name="Nucleic Acids Res.">
        <title>Genome sequence of Shigella flexneri 2a: insights into pathogenicity through comparison with genomes of Escherichia coli K12 and O157.</title>
        <authorList>
            <person name="Jin Q."/>
            <person name="Yuan Z."/>
            <person name="Xu J."/>
            <person name="Wang Y."/>
            <person name="Shen Y."/>
            <person name="Lu W."/>
            <person name="Wang J."/>
            <person name="Liu H."/>
            <person name="Yang J."/>
            <person name="Yang F."/>
            <person name="Zhang X."/>
            <person name="Zhang J."/>
            <person name="Yang G."/>
            <person name="Wu H."/>
            <person name="Qu D."/>
            <person name="Dong J."/>
            <person name="Sun L."/>
            <person name="Xue Y."/>
            <person name="Zhao A."/>
            <person name="Gao Y."/>
            <person name="Zhu J."/>
            <person name="Kan B."/>
            <person name="Ding K."/>
            <person name="Chen S."/>
            <person name="Cheng H."/>
            <person name="Yao Z."/>
            <person name="He B."/>
            <person name="Chen R."/>
            <person name="Ma D."/>
            <person name="Qiang B."/>
            <person name="Wen Y."/>
            <person name="Hou Y."/>
            <person name="Yu J."/>
        </authorList>
    </citation>
    <scope>NUCLEOTIDE SEQUENCE [LARGE SCALE GENOMIC DNA]</scope>
    <source>
        <strain>301 / Serotype 2a</strain>
    </source>
</reference>
<reference key="2">
    <citation type="journal article" date="2003" name="Infect. Immun.">
        <title>Complete genome sequence and comparative genomics of Shigella flexneri serotype 2a strain 2457T.</title>
        <authorList>
            <person name="Wei J."/>
            <person name="Goldberg M.B."/>
            <person name="Burland V."/>
            <person name="Venkatesan M.M."/>
            <person name="Deng W."/>
            <person name="Fournier G."/>
            <person name="Mayhew G.F."/>
            <person name="Plunkett G. III"/>
            <person name="Rose D.J."/>
            <person name="Darling A."/>
            <person name="Mau B."/>
            <person name="Perna N.T."/>
            <person name="Payne S.M."/>
            <person name="Runyen-Janecky L.J."/>
            <person name="Zhou S."/>
            <person name="Schwartz D.C."/>
            <person name="Blattner F.R."/>
        </authorList>
    </citation>
    <scope>NUCLEOTIDE SEQUENCE [LARGE SCALE GENOMIC DNA]</scope>
    <source>
        <strain>ATCC 700930 / 2457T / Serotype 2a</strain>
    </source>
</reference>
<comment type="function">
    <text evidence="1">Displays thioesterase activity against medium- to long-chain acyl-CoA substrates (By similarity). Is involved in the thioesterase-dependent beta-oxidation pathway of (9Z,11E)-octadecadienoate (conjugated linoleic acid or CLA), along with TesB and FadM (By similarity).</text>
</comment>
<comment type="catalytic activity">
    <reaction evidence="1">
        <text>a fatty acyl-CoA + H2O = a fatty acid + CoA + H(+)</text>
        <dbReference type="Rhea" id="RHEA:16781"/>
        <dbReference type="ChEBI" id="CHEBI:15377"/>
        <dbReference type="ChEBI" id="CHEBI:15378"/>
        <dbReference type="ChEBI" id="CHEBI:28868"/>
        <dbReference type="ChEBI" id="CHEBI:57287"/>
        <dbReference type="ChEBI" id="CHEBI:77636"/>
        <dbReference type="EC" id="3.1.2.20"/>
    </reaction>
</comment>
<comment type="catalytic activity">
    <reaction evidence="1">
        <text>a medium-chain fatty acyl-CoA + H2O = a medium-chain fatty acid + CoA + H(+)</text>
        <dbReference type="Rhea" id="RHEA:68184"/>
        <dbReference type="ChEBI" id="CHEBI:15377"/>
        <dbReference type="ChEBI" id="CHEBI:15378"/>
        <dbReference type="ChEBI" id="CHEBI:57287"/>
        <dbReference type="ChEBI" id="CHEBI:59558"/>
        <dbReference type="ChEBI" id="CHEBI:90546"/>
    </reaction>
</comment>
<comment type="catalytic activity">
    <reaction evidence="1">
        <text>a long-chain fatty acyl-CoA + H2O = a long-chain fatty acid + CoA + H(+)</text>
        <dbReference type="Rhea" id="RHEA:67680"/>
        <dbReference type="ChEBI" id="CHEBI:15377"/>
        <dbReference type="ChEBI" id="CHEBI:15378"/>
        <dbReference type="ChEBI" id="CHEBI:57287"/>
        <dbReference type="ChEBI" id="CHEBI:57560"/>
        <dbReference type="ChEBI" id="CHEBI:83139"/>
    </reaction>
</comment>
<comment type="subcellular location">
    <subcellularLocation>
        <location evidence="1">Cytoplasm</location>
    </subcellularLocation>
</comment>
<comment type="similarity">
    <text evidence="2">Belongs to the YigI thioesterase family.</text>
</comment>
<comment type="sequence caution" evidence="2">
    <conflict type="erroneous initiation">
        <sequence resource="EMBL-CDS" id="AAN45333"/>
    </conflict>
</comment>
<comment type="sequence caution" evidence="2">
    <conflict type="erroneous initiation">
        <sequence resource="EMBL-CDS" id="AAP18865"/>
    </conflict>
</comment>
<protein>
    <recommendedName>
        <fullName evidence="1">Medium/long-chain acyl-CoA thioesterase YigI</fullName>
        <ecNumber evidence="1">3.1.2.20</ecNumber>
    </recommendedName>
</protein>
<evidence type="ECO:0000250" key="1">
    <source>
        <dbReference type="UniProtKB" id="P0ADP2"/>
    </source>
</evidence>
<evidence type="ECO:0000305" key="2"/>
<sequence length="155" mass="17163">MSAVLTAEQALKLVGEMFVYHMPFNRALGMELERYEKEFAQLAFKNQPMMVGNWAQSILHGGVIASALDVAAGLVCVGSTLTRHETISEDELRQRLSRMGTIDLRVDYLRPGRGERFTATSSLLRAGNKVAVARVELHNEEQLYIASATATYMVG</sequence>
<feature type="chain" id="PRO_0000169662" description="Medium/long-chain acyl-CoA thioesterase YigI">
    <location>
        <begin position="1"/>
        <end position="155"/>
    </location>
</feature>
<proteinExistence type="inferred from homology"/>
<keyword id="KW-0963">Cytoplasm</keyword>
<keyword id="KW-0378">Hydrolase</keyword>
<keyword id="KW-0443">Lipid metabolism</keyword>
<keyword id="KW-1185">Reference proteome</keyword>
<gene>
    <name type="primary">yigI</name>
    <name type="ordered locus">SF3898</name>
    <name type="ordered locus">S3857</name>
</gene>
<organism>
    <name type="scientific">Shigella flexneri</name>
    <dbReference type="NCBI Taxonomy" id="623"/>
    <lineage>
        <taxon>Bacteria</taxon>
        <taxon>Pseudomonadati</taxon>
        <taxon>Pseudomonadota</taxon>
        <taxon>Gammaproteobacteria</taxon>
        <taxon>Enterobacterales</taxon>
        <taxon>Enterobacteriaceae</taxon>
        <taxon>Shigella</taxon>
    </lineage>
</organism>
<accession>P0ADP4</accession>
<accession>P27845</accession>
<accession>P76761</accession>
<dbReference type="EC" id="3.1.2.20" evidence="1"/>
<dbReference type="EMBL" id="AE005674">
    <property type="protein sequence ID" value="AAN45333.1"/>
    <property type="status" value="ALT_INIT"/>
    <property type="molecule type" value="Genomic_DNA"/>
</dbReference>
<dbReference type="EMBL" id="AE014073">
    <property type="protein sequence ID" value="AAP18865.1"/>
    <property type="status" value="ALT_INIT"/>
    <property type="molecule type" value="Genomic_DNA"/>
</dbReference>
<dbReference type="RefSeq" id="NP_709626.3">
    <property type="nucleotide sequence ID" value="NC_004337.2"/>
</dbReference>
<dbReference type="RefSeq" id="WP_001277142.1">
    <property type="nucleotide sequence ID" value="NZ_WPGW01000036.1"/>
</dbReference>
<dbReference type="SMR" id="P0ADP4"/>
<dbReference type="STRING" id="198214.SF3898"/>
<dbReference type="PaxDb" id="198214-SF3898"/>
<dbReference type="GeneID" id="1025923"/>
<dbReference type="GeneID" id="93778117"/>
<dbReference type="KEGG" id="sfl:SF3898"/>
<dbReference type="KEGG" id="sfx:S3857"/>
<dbReference type="PATRIC" id="fig|198214.7.peg.4598"/>
<dbReference type="HOGENOM" id="CLU_089876_7_2_6"/>
<dbReference type="Proteomes" id="UP000001006">
    <property type="component" value="Chromosome"/>
</dbReference>
<dbReference type="Proteomes" id="UP000002673">
    <property type="component" value="Chromosome"/>
</dbReference>
<dbReference type="GO" id="GO:0005737">
    <property type="term" value="C:cytoplasm"/>
    <property type="evidence" value="ECO:0007669"/>
    <property type="project" value="UniProtKB-SubCell"/>
</dbReference>
<dbReference type="GO" id="GO:0016289">
    <property type="term" value="F:acyl-CoA hydrolase activity"/>
    <property type="evidence" value="ECO:0007669"/>
    <property type="project" value="UniProtKB-ARBA"/>
</dbReference>
<dbReference type="GO" id="GO:0006629">
    <property type="term" value="P:lipid metabolic process"/>
    <property type="evidence" value="ECO:0007669"/>
    <property type="project" value="UniProtKB-KW"/>
</dbReference>
<dbReference type="CDD" id="cd03443">
    <property type="entry name" value="PaaI_thioesterase"/>
    <property type="match status" value="1"/>
</dbReference>
<dbReference type="FunFam" id="3.10.129.10:FF:000007">
    <property type="entry name" value="Thioesterase family protein"/>
    <property type="match status" value="1"/>
</dbReference>
<dbReference type="Gene3D" id="3.10.129.10">
    <property type="entry name" value="Hotdog Thioesterase"/>
    <property type="match status" value="1"/>
</dbReference>
<dbReference type="InterPro" id="IPR029069">
    <property type="entry name" value="HotDog_dom_sf"/>
</dbReference>
<dbReference type="InterPro" id="IPR003736">
    <property type="entry name" value="PAAI_dom"/>
</dbReference>
<dbReference type="InterPro" id="IPR006683">
    <property type="entry name" value="Thioestr_dom"/>
</dbReference>
<dbReference type="NCBIfam" id="NF008675">
    <property type="entry name" value="PRK11688.1"/>
    <property type="match status" value="1"/>
</dbReference>
<dbReference type="NCBIfam" id="TIGR00369">
    <property type="entry name" value="unchar_dom_1"/>
    <property type="match status" value="1"/>
</dbReference>
<dbReference type="PANTHER" id="PTHR43240">
    <property type="entry name" value="1,4-DIHYDROXY-2-NAPHTHOYL-COA THIOESTERASE 1"/>
    <property type="match status" value="1"/>
</dbReference>
<dbReference type="PANTHER" id="PTHR43240:SF20">
    <property type="entry name" value="MEDIUM_LONG-CHAIN ACYL-COA THIOESTERASE YIGI"/>
    <property type="match status" value="1"/>
</dbReference>
<dbReference type="Pfam" id="PF03061">
    <property type="entry name" value="4HBT"/>
    <property type="match status" value="1"/>
</dbReference>
<dbReference type="SUPFAM" id="SSF54637">
    <property type="entry name" value="Thioesterase/thiol ester dehydrase-isomerase"/>
    <property type="match status" value="1"/>
</dbReference>